<gene>
    <name evidence="1" type="primary">rplF</name>
    <name type="ordered locus">spr0204</name>
</gene>
<name>RL6_STRR6</name>
<proteinExistence type="inferred from homology"/>
<reference key="1">
    <citation type="journal article" date="2001" name="J. Bacteriol.">
        <title>Genome of the bacterium Streptococcus pneumoniae strain R6.</title>
        <authorList>
            <person name="Hoskins J."/>
            <person name="Alborn W.E. Jr."/>
            <person name="Arnold J."/>
            <person name="Blaszczak L.C."/>
            <person name="Burgett S."/>
            <person name="DeHoff B.S."/>
            <person name="Estrem S.T."/>
            <person name="Fritz L."/>
            <person name="Fu D.-J."/>
            <person name="Fuller W."/>
            <person name="Geringer C."/>
            <person name="Gilmour R."/>
            <person name="Glass J.S."/>
            <person name="Khoja H."/>
            <person name="Kraft A.R."/>
            <person name="Lagace R.E."/>
            <person name="LeBlanc D.J."/>
            <person name="Lee L.N."/>
            <person name="Lefkowitz E.J."/>
            <person name="Lu J."/>
            <person name="Matsushima P."/>
            <person name="McAhren S.M."/>
            <person name="McHenney M."/>
            <person name="McLeaster K."/>
            <person name="Mundy C.W."/>
            <person name="Nicas T.I."/>
            <person name="Norris F.H."/>
            <person name="O'Gara M."/>
            <person name="Peery R.B."/>
            <person name="Robertson G.T."/>
            <person name="Rockey P."/>
            <person name="Sun P.-M."/>
            <person name="Winkler M.E."/>
            <person name="Yang Y."/>
            <person name="Young-Bellido M."/>
            <person name="Zhao G."/>
            <person name="Zook C.A."/>
            <person name="Baltz R.H."/>
            <person name="Jaskunas S.R."/>
            <person name="Rosteck P.R. Jr."/>
            <person name="Skatrud P.L."/>
            <person name="Glass J.I."/>
        </authorList>
    </citation>
    <scope>NUCLEOTIDE SEQUENCE [LARGE SCALE GENOMIC DNA]</scope>
    <source>
        <strain>ATCC BAA-255 / R6</strain>
    </source>
</reference>
<dbReference type="EMBL" id="AE007317">
    <property type="protein sequence ID" value="AAK99008.1"/>
    <property type="molecule type" value="Genomic_DNA"/>
</dbReference>
<dbReference type="PIR" id="D97897">
    <property type="entry name" value="D97897"/>
</dbReference>
<dbReference type="RefSeq" id="NP_357798.1">
    <property type="nucleotide sequence ID" value="NC_003098.1"/>
</dbReference>
<dbReference type="RefSeq" id="WP_000086633.1">
    <property type="nucleotide sequence ID" value="NC_003098.1"/>
</dbReference>
<dbReference type="SMR" id="Q8CWV3"/>
<dbReference type="STRING" id="171101.spr0204"/>
<dbReference type="KEGG" id="spr:spr0204"/>
<dbReference type="PATRIC" id="fig|171101.6.peg.236"/>
<dbReference type="eggNOG" id="COG0097">
    <property type="taxonomic scope" value="Bacteria"/>
</dbReference>
<dbReference type="HOGENOM" id="CLU_065464_1_2_9"/>
<dbReference type="PRO" id="PR:Q8CWV3"/>
<dbReference type="Proteomes" id="UP000000586">
    <property type="component" value="Chromosome"/>
</dbReference>
<dbReference type="GO" id="GO:0022625">
    <property type="term" value="C:cytosolic large ribosomal subunit"/>
    <property type="evidence" value="ECO:0000318"/>
    <property type="project" value="GO_Central"/>
</dbReference>
<dbReference type="GO" id="GO:0019843">
    <property type="term" value="F:rRNA binding"/>
    <property type="evidence" value="ECO:0007669"/>
    <property type="project" value="UniProtKB-UniRule"/>
</dbReference>
<dbReference type="GO" id="GO:0003735">
    <property type="term" value="F:structural constituent of ribosome"/>
    <property type="evidence" value="ECO:0000318"/>
    <property type="project" value="GO_Central"/>
</dbReference>
<dbReference type="GO" id="GO:0002181">
    <property type="term" value="P:cytoplasmic translation"/>
    <property type="evidence" value="ECO:0000318"/>
    <property type="project" value="GO_Central"/>
</dbReference>
<dbReference type="FunFam" id="3.90.930.12:FF:000001">
    <property type="entry name" value="50S ribosomal protein L6"/>
    <property type="match status" value="1"/>
</dbReference>
<dbReference type="FunFam" id="3.90.930.12:FF:000002">
    <property type="entry name" value="50S ribosomal protein L6"/>
    <property type="match status" value="1"/>
</dbReference>
<dbReference type="Gene3D" id="3.90.930.12">
    <property type="entry name" value="Ribosomal protein L6, alpha-beta domain"/>
    <property type="match status" value="2"/>
</dbReference>
<dbReference type="HAMAP" id="MF_01365_B">
    <property type="entry name" value="Ribosomal_uL6_B"/>
    <property type="match status" value="1"/>
</dbReference>
<dbReference type="InterPro" id="IPR000702">
    <property type="entry name" value="Ribosomal_uL6-like"/>
</dbReference>
<dbReference type="InterPro" id="IPR036789">
    <property type="entry name" value="Ribosomal_uL6-like_a/b-dom_sf"/>
</dbReference>
<dbReference type="InterPro" id="IPR020040">
    <property type="entry name" value="Ribosomal_uL6_a/b-dom"/>
</dbReference>
<dbReference type="InterPro" id="IPR019906">
    <property type="entry name" value="Ribosomal_uL6_bac-type"/>
</dbReference>
<dbReference type="InterPro" id="IPR002358">
    <property type="entry name" value="Ribosomal_uL6_CS"/>
</dbReference>
<dbReference type="NCBIfam" id="TIGR03654">
    <property type="entry name" value="L6_bact"/>
    <property type="match status" value="1"/>
</dbReference>
<dbReference type="PANTHER" id="PTHR11655">
    <property type="entry name" value="60S/50S RIBOSOMAL PROTEIN L6/L9"/>
    <property type="match status" value="1"/>
</dbReference>
<dbReference type="PANTHER" id="PTHR11655:SF14">
    <property type="entry name" value="LARGE RIBOSOMAL SUBUNIT PROTEIN UL6M"/>
    <property type="match status" value="1"/>
</dbReference>
<dbReference type="Pfam" id="PF00347">
    <property type="entry name" value="Ribosomal_L6"/>
    <property type="match status" value="2"/>
</dbReference>
<dbReference type="PIRSF" id="PIRSF002162">
    <property type="entry name" value="Ribosomal_L6"/>
    <property type="match status" value="1"/>
</dbReference>
<dbReference type="PRINTS" id="PR00059">
    <property type="entry name" value="RIBOSOMALL6"/>
</dbReference>
<dbReference type="SUPFAM" id="SSF56053">
    <property type="entry name" value="Ribosomal protein L6"/>
    <property type="match status" value="2"/>
</dbReference>
<dbReference type="PROSITE" id="PS00525">
    <property type="entry name" value="RIBOSOMAL_L6_1"/>
    <property type="match status" value="1"/>
</dbReference>
<feature type="chain" id="PRO_0000260945" description="Large ribosomal subunit protein uL6">
    <location>
        <begin position="1"/>
        <end position="178"/>
    </location>
</feature>
<comment type="function">
    <text evidence="1">This protein binds to the 23S rRNA, and is important in its secondary structure. It is located near the subunit interface in the base of the L7/L12 stalk, and near the tRNA binding site of the peptidyltransferase center.</text>
</comment>
<comment type="subunit">
    <text evidence="1">Part of the 50S ribosomal subunit.</text>
</comment>
<comment type="similarity">
    <text evidence="1">Belongs to the universal ribosomal protein uL6 family.</text>
</comment>
<sequence>MSRIGNKVIVLPAGVELANNDNVVTVKGPKGELTREFSKDIEIRVEGTEVTLHRPNDSKEMKTIHGTTRALLNNMVVGVSEGFKKELEMRGVGYRAQLQGSKLVLAVGKSHPDEVEAPEGITFELPNPTTIVVSGISKEVVGQTAAYVRSLRSPEPYKGKGIRYVGEFVRRKEGKTGK</sequence>
<organism>
    <name type="scientific">Streptococcus pneumoniae (strain ATCC BAA-255 / R6)</name>
    <dbReference type="NCBI Taxonomy" id="171101"/>
    <lineage>
        <taxon>Bacteria</taxon>
        <taxon>Bacillati</taxon>
        <taxon>Bacillota</taxon>
        <taxon>Bacilli</taxon>
        <taxon>Lactobacillales</taxon>
        <taxon>Streptococcaceae</taxon>
        <taxon>Streptococcus</taxon>
    </lineage>
</organism>
<keyword id="KW-1185">Reference proteome</keyword>
<keyword id="KW-0687">Ribonucleoprotein</keyword>
<keyword id="KW-0689">Ribosomal protein</keyword>
<keyword id="KW-0694">RNA-binding</keyword>
<keyword id="KW-0699">rRNA-binding</keyword>
<evidence type="ECO:0000255" key="1">
    <source>
        <dbReference type="HAMAP-Rule" id="MF_01365"/>
    </source>
</evidence>
<evidence type="ECO:0000305" key="2"/>
<accession>Q8CWV3</accession>
<protein>
    <recommendedName>
        <fullName evidence="1">Large ribosomal subunit protein uL6</fullName>
    </recommendedName>
    <alternativeName>
        <fullName evidence="2">50S ribosomal protein L6</fullName>
    </alternativeName>
</protein>